<evidence type="ECO:0000250" key="1"/>
<evidence type="ECO:0000250" key="2">
    <source>
        <dbReference type="UniProtKB" id="Q5HFT0"/>
    </source>
</evidence>
<evidence type="ECO:0000250" key="3">
    <source>
        <dbReference type="UniProtKB" id="Q9L524"/>
    </source>
</evidence>
<evidence type="ECO:0000255" key="4">
    <source>
        <dbReference type="PROSITE-ProRule" id="PRU00169"/>
    </source>
</evidence>
<evidence type="ECO:0000255" key="5">
    <source>
        <dbReference type="PROSITE-ProRule" id="PRU01091"/>
    </source>
</evidence>
<evidence type="ECO:0000305" key="6"/>
<keyword id="KW-0010">Activator</keyword>
<keyword id="KW-0963">Cytoplasm</keyword>
<keyword id="KW-0238">DNA-binding</keyword>
<keyword id="KW-0597">Phosphoprotein</keyword>
<keyword id="KW-0678">Repressor</keyword>
<keyword id="KW-0804">Transcription</keyword>
<keyword id="KW-0805">Transcription regulation</keyword>
<keyword id="KW-0902">Two-component regulatory system</keyword>
<organism>
    <name type="scientific">Staphylococcus aureus (strain MSSA476)</name>
    <dbReference type="NCBI Taxonomy" id="282459"/>
    <lineage>
        <taxon>Bacteria</taxon>
        <taxon>Bacillati</taxon>
        <taxon>Bacillota</taxon>
        <taxon>Bacilli</taxon>
        <taxon>Bacillales</taxon>
        <taxon>Staphylococcaceae</taxon>
        <taxon>Staphylococcus</taxon>
    </lineage>
</organism>
<gene>
    <name type="primary">srrA</name>
    <name type="ordered locus">SAS1432</name>
</gene>
<comment type="function">
    <text evidence="2 3">Member of the two-component regulatory system SrrA/SrrB, which is involved in the global regulation of staphylococcal virulence factors in response to environmental oxygen levels as well as biofilm formation. Also plays an essential role in host-derived nitric oxide resistance by regulating hmp/flavohemoglobin, an enzyme that detoxifies nitric oxide by converting it to nitrate (By similarity). Functions as a transcription regulator by direct binding to promoter regions of target genes (By similarity).</text>
</comment>
<comment type="subcellular location">
    <subcellularLocation>
        <location evidence="1">Cytoplasm</location>
    </subcellularLocation>
</comment>
<comment type="PTM">
    <text evidence="1">Phosphorylated by SrrB.</text>
</comment>
<comment type="sequence caution" evidence="6">
    <conflict type="erroneous initiation">
        <sequence resource="EMBL-CDS" id="CAG43209"/>
    </conflict>
</comment>
<dbReference type="EMBL" id="BX571857">
    <property type="protein sequence ID" value="CAG43209.1"/>
    <property type="status" value="ALT_INIT"/>
    <property type="molecule type" value="Genomic_DNA"/>
</dbReference>
<dbReference type="RefSeq" id="WP_000064078.1">
    <property type="nucleotide sequence ID" value="NC_002953.3"/>
</dbReference>
<dbReference type="SMR" id="Q6G972"/>
<dbReference type="GeneID" id="98345856"/>
<dbReference type="KEGG" id="sas:SAS1432"/>
<dbReference type="HOGENOM" id="CLU_000445_30_4_9"/>
<dbReference type="GO" id="GO:0005829">
    <property type="term" value="C:cytosol"/>
    <property type="evidence" value="ECO:0007669"/>
    <property type="project" value="TreeGrafter"/>
</dbReference>
<dbReference type="GO" id="GO:0032993">
    <property type="term" value="C:protein-DNA complex"/>
    <property type="evidence" value="ECO:0007669"/>
    <property type="project" value="TreeGrafter"/>
</dbReference>
<dbReference type="GO" id="GO:0000156">
    <property type="term" value="F:phosphorelay response regulator activity"/>
    <property type="evidence" value="ECO:0007669"/>
    <property type="project" value="TreeGrafter"/>
</dbReference>
<dbReference type="GO" id="GO:0000976">
    <property type="term" value="F:transcription cis-regulatory region binding"/>
    <property type="evidence" value="ECO:0007669"/>
    <property type="project" value="TreeGrafter"/>
</dbReference>
<dbReference type="GO" id="GO:0006355">
    <property type="term" value="P:regulation of DNA-templated transcription"/>
    <property type="evidence" value="ECO:0007669"/>
    <property type="project" value="InterPro"/>
</dbReference>
<dbReference type="CDD" id="cd17574">
    <property type="entry name" value="REC_OmpR"/>
    <property type="match status" value="1"/>
</dbReference>
<dbReference type="CDD" id="cd00383">
    <property type="entry name" value="trans_reg_C"/>
    <property type="match status" value="1"/>
</dbReference>
<dbReference type="FunFam" id="3.40.50.2300:FF:000001">
    <property type="entry name" value="DNA-binding response regulator PhoB"/>
    <property type="match status" value="1"/>
</dbReference>
<dbReference type="FunFam" id="1.10.10.10:FF:000018">
    <property type="entry name" value="DNA-binding response regulator ResD"/>
    <property type="match status" value="1"/>
</dbReference>
<dbReference type="Gene3D" id="3.40.50.2300">
    <property type="match status" value="1"/>
</dbReference>
<dbReference type="Gene3D" id="6.10.250.690">
    <property type="match status" value="1"/>
</dbReference>
<dbReference type="Gene3D" id="1.10.10.10">
    <property type="entry name" value="Winged helix-like DNA-binding domain superfamily/Winged helix DNA-binding domain"/>
    <property type="match status" value="1"/>
</dbReference>
<dbReference type="InterPro" id="IPR011006">
    <property type="entry name" value="CheY-like_superfamily"/>
</dbReference>
<dbReference type="InterPro" id="IPR001867">
    <property type="entry name" value="OmpR/PhoB-type_DNA-bd"/>
</dbReference>
<dbReference type="InterPro" id="IPR001789">
    <property type="entry name" value="Sig_transdc_resp-reg_receiver"/>
</dbReference>
<dbReference type="InterPro" id="IPR039420">
    <property type="entry name" value="WalR-like"/>
</dbReference>
<dbReference type="InterPro" id="IPR036388">
    <property type="entry name" value="WH-like_DNA-bd_sf"/>
</dbReference>
<dbReference type="PANTHER" id="PTHR48111">
    <property type="entry name" value="REGULATOR OF RPOS"/>
    <property type="match status" value="1"/>
</dbReference>
<dbReference type="PANTHER" id="PTHR48111:SF44">
    <property type="entry name" value="TRANSCRIPTIONAL REGULATORY PROTEIN RESD"/>
    <property type="match status" value="1"/>
</dbReference>
<dbReference type="Pfam" id="PF00072">
    <property type="entry name" value="Response_reg"/>
    <property type="match status" value="1"/>
</dbReference>
<dbReference type="Pfam" id="PF00486">
    <property type="entry name" value="Trans_reg_C"/>
    <property type="match status" value="1"/>
</dbReference>
<dbReference type="SMART" id="SM00448">
    <property type="entry name" value="REC"/>
    <property type="match status" value="1"/>
</dbReference>
<dbReference type="SMART" id="SM00862">
    <property type="entry name" value="Trans_reg_C"/>
    <property type="match status" value="1"/>
</dbReference>
<dbReference type="SUPFAM" id="SSF52172">
    <property type="entry name" value="CheY-like"/>
    <property type="match status" value="1"/>
</dbReference>
<dbReference type="PROSITE" id="PS51755">
    <property type="entry name" value="OMPR_PHOB"/>
    <property type="match status" value="1"/>
</dbReference>
<dbReference type="PROSITE" id="PS50110">
    <property type="entry name" value="RESPONSE_REGULATORY"/>
    <property type="match status" value="1"/>
</dbReference>
<reference key="1">
    <citation type="journal article" date="2004" name="Proc. Natl. Acad. Sci. U.S.A.">
        <title>Complete genomes of two clinical Staphylococcus aureus strains: evidence for the rapid evolution of virulence and drug resistance.</title>
        <authorList>
            <person name="Holden M.T.G."/>
            <person name="Feil E.J."/>
            <person name="Lindsay J.A."/>
            <person name="Peacock S.J."/>
            <person name="Day N.P.J."/>
            <person name="Enright M.C."/>
            <person name="Foster T.J."/>
            <person name="Moore C.E."/>
            <person name="Hurst L."/>
            <person name="Atkin R."/>
            <person name="Barron A."/>
            <person name="Bason N."/>
            <person name="Bentley S.D."/>
            <person name="Chillingworth C."/>
            <person name="Chillingworth T."/>
            <person name="Churcher C."/>
            <person name="Clark L."/>
            <person name="Corton C."/>
            <person name="Cronin A."/>
            <person name="Doggett J."/>
            <person name="Dowd L."/>
            <person name="Feltwell T."/>
            <person name="Hance Z."/>
            <person name="Harris B."/>
            <person name="Hauser H."/>
            <person name="Holroyd S."/>
            <person name="Jagels K."/>
            <person name="James K.D."/>
            <person name="Lennard N."/>
            <person name="Line A."/>
            <person name="Mayes R."/>
            <person name="Moule S."/>
            <person name="Mungall K."/>
            <person name="Ormond D."/>
            <person name="Quail M.A."/>
            <person name="Rabbinowitsch E."/>
            <person name="Rutherford K.M."/>
            <person name="Sanders M."/>
            <person name="Sharp S."/>
            <person name="Simmonds M."/>
            <person name="Stevens K."/>
            <person name="Whitehead S."/>
            <person name="Barrell B.G."/>
            <person name="Spratt B.G."/>
            <person name="Parkhill J."/>
        </authorList>
    </citation>
    <scope>NUCLEOTIDE SEQUENCE [LARGE SCALE GENOMIC DNA]</scope>
    <source>
        <strain>MSSA476</strain>
    </source>
</reference>
<accession>Q6G972</accession>
<protein>
    <recommendedName>
        <fullName>Transcriptional regulatory protein SrrA</fullName>
    </recommendedName>
    <alternativeName>
        <fullName>Staphylococcal respiratory response protein A</fullName>
    </alternativeName>
</protein>
<feature type="chain" id="PRO_0000081252" description="Transcriptional regulatory protein SrrA">
    <location>
        <begin position="1"/>
        <end position="241"/>
    </location>
</feature>
<feature type="domain" description="Response regulatory" evidence="4">
    <location>
        <begin position="4"/>
        <end position="117"/>
    </location>
</feature>
<feature type="DNA-binding region" description="OmpR/PhoB-type" evidence="5">
    <location>
        <begin position="133"/>
        <end position="233"/>
    </location>
</feature>
<feature type="modified residue" description="4-aspartylphosphate" evidence="4">
    <location>
        <position position="53"/>
    </location>
</feature>
<name>SRRA_STAAS</name>
<proteinExistence type="inferred from homology"/>
<sequence length="241" mass="28161">MSNEILIVDDEDRIRRLLKMYLERESFEIHEASNGQEAYELAMENNYACILLDLMLPEMDGIQVATKLREHKQTPIIMLTAKGEETNRVEGFESGADDYIVKPFSPREVVLRVKALLRRTQSTTVEQSEPHARDVIEFKHLEIDNDAHRVLADNQEVNLTPKEYELLIYLAKTPNKVFDREQLLKEVWHYEFYGDLRTVDTHVKRLREKLNRVSSEAAHMIQTVWGVGYKFEVKSNDEPAK</sequence>